<reference key="1">
    <citation type="journal article" date="2007" name="Proc. Natl. Acad. Sci. U.S.A.">
        <title>Genome sequencing and comparative analysis of Saccharomyces cerevisiae strain YJM789.</title>
        <authorList>
            <person name="Wei W."/>
            <person name="McCusker J.H."/>
            <person name="Hyman R.W."/>
            <person name="Jones T."/>
            <person name="Ning Y."/>
            <person name="Cao Z."/>
            <person name="Gu Z."/>
            <person name="Bruno D."/>
            <person name="Miranda M."/>
            <person name="Nguyen M."/>
            <person name="Wilhelmy J."/>
            <person name="Komp C."/>
            <person name="Tamse R."/>
            <person name="Wang X."/>
            <person name="Jia P."/>
            <person name="Luedi P."/>
            <person name="Oefner P.J."/>
            <person name="David L."/>
            <person name="Dietrich F.S."/>
            <person name="Li Y."/>
            <person name="Davis R.W."/>
            <person name="Steinmetz L.M."/>
        </authorList>
    </citation>
    <scope>NUCLEOTIDE SEQUENCE [LARGE SCALE GENOMIC DNA]</scope>
    <source>
        <strain>YJM789</strain>
    </source>
</reference>
<organism>
    <name type="scientific">Saccharomyces cerevisiae (strain YJM789)</name>
    <name type="common">Baker's yeast</name>
    <dbReference type="NCBI Taxonomy" id="307796"/>
    <lineage>
        <taxon>Eukaryota</taxon>
        <taxon>Fungi</taxon>
        <taxon>Dikarya</taxon>
        <taxon>Ascomycota</taxon>
        <taxon>Saccharomycotina</taxon>
        <taxon>Saccharomycetes</taxon>
        <taxon>Saccharomycetales</taxon>
        <taxon>Saccharomycetaceae</taxon>
        <taxon>Saccharomyces</taxon>
    </lineage>
</organism>
<gene>
    <name type="primary">AIM6</name>
    <name type="ORF">SCY_0685</name>
</gene>
<feature type="signal peptide" evidence="1">
    <location>
        <begin position="1"/>
        <end position="26"/>
    </location>
</feature>
<feature type="chain" id="PRO_0000408712" description="Altered inheritance of mitochondria protein 6">
    <location>
        <begin position="27"/>
        <end position="390"/>
    </location>
</feature>
<protein>
    <recommendedName>
        <fullName>Altered inheritance of mitochondria protein 6</fullName>
    </recommendedName>
</protein>
<name>AIM6_YEAS7</name>
<accession>A6ZX97</accession>
<evidence type="ECO:0000255" key="1"/>
<evidence type="ECO:0000305" key="2"/>
<proteinExistence type="inferred from homology"/>
<keyword id="KW-0732">Signal</keyword>
<dbReference type="EMBL" id="AAFW02000145">
    <property type="protein sequence ID" value="EDN60127.1"/>
    <property type="molecule type" value="Genomic_DNA"/>
</dbReference>
<dbReference type="HOGENOM" id="CLU_031561_1_1_1"/>
<dbReference type="Proteomes" id="UP000007060">
    <property type="component" value="Unassembled WGS sequence"/>
</dbReference>
<dbReference type="GO" id="GO:0008081">
    <property type="term" value="F:phosphoric diester hydrolase activity"/>
    <property type="evidence" value="ECO:0007669"/>
    <property type="project" value="InterPro"/>
</dbReference>
<dbReference type="GO" id="GO:0006629">
    <property type="term" value="P:lipid metabolic process"/>
    <property type="evidence" value="ECO:0007669"/>
    <property type="project" value="InterPro"/>
</dbReference>
<dbReference type="CDD" id="cd08577">
    <property type="entry name" value="PI-PLCc_GDPD_SF_unchar3"/>
    <property type="match status" value="1"/>
</dbReference>
<dbReference type="InterPro" id="IPR039559">
    <property type="entry name" value="AIM6_PI-PLC-like_dom"/>
</dbReference>
<dbReference type="InterPro" id="IPR051236">
    <property type="entry name" value="HAT_RTT109-like"/>
</dbReference>
<dbReference type="InterPro" id="IPR017946">
    <property type="entry name" value="PLC-like_Pdiesterase_TIM-brl"/>
</dbReference>
<dbReference type="PANTHER" id="PTHR31571">
    <property type="entry name" value="ALTERED INHERITANCE OF MITOCHONDRIA PROTEIN 6"/>
    <property type="match status" value="1"/>
</dbReference>
<dbReference type="PANTHER" id="PTHR31571:SF1">
    <property type="entry name" value="ALTERED INHERITANCE OF MITOCHONDRIA PROTEIN 6"/>
    <property type="match status" value="1"/>
</dbReference>
<dbReference type="SUPFAM" id="SSF51695">
    <property type="entry name" value="PLC-like phosphodiesterases"/>
    <property type="match status" value="1"/>
</dbReference>
<comment type="similarity">
    <text evidence="2">Belongs to the AIM6 family.</text>
</comment>
<sequence>MLGLKGCLTILIGYVIAVCALFSSRGRNPSLTDWEKLKDQKISNIDNFGLTGQHLLEFFQENLPFLSFSEEKYRHKHVSLYYDVFKEYILRRASSKKCLPVDSAIAKLNKDVNPMPVHSHNDYWRKLPLFEGLAYGASSTEADVWNIDEKILAVGHNEAYLDPVELTLDKLYTGPLLEILDEVNCQDSDSDRKNGVFFNSPETSLFFYIDFKSDDNELTYKLLMEQYFKSLIDSGYLTYYDMKKDEIIWRPVTVILTGNYPTSLDILDNGNDNGYFESNQRFAFLDAPLLSLEPKYSKLSVAATVSFSQLMKHCGSDHWKVSLRGRMDSNEISCAKSIIDGAHALKLKTRIWGAPTWPANLVETISRQIIHDLGSDLLNLDNLFMASSLI</sequence>